<comment type="function">
    <text>Specifically cleaves the zymogen plasminogen to form the active enzyme plasmin.</text>
</comment>
<comment type="catalytic activity">
    <reaction>
        <text>Specific cleavage of Arg-|-Val bond in plasminogen to form plasmin.</text>
        <dbReference type="EC" id="3.4.21.73"/>
    </reaction>
</comment>
<comment type="subcellular location">
    <subcellularLocation>
        <location evidence="1">Secreted</location>
    </subcellularLocation>
</comment>
<comment type="similarity">
    <text evidence="5">Belongs to the peptidase S1 family.</text>
</comment>
<protein>
    <recommendedName>
        <fullName>Urokinase-type plasminogen activator</fullName>
        <shortName>U-plasminogen activator</shortName>
        <shortName>uPA</shortName>
        <ecNumber>3.4.21.73</ecNumber>
    </recommendedName>
    <component>
        <recommendedName>
            <fullName>Urokinase-type plasminogen activator chain A</fullName>
        </recommendedName>
    </component>
    <component>
        <recommendedName>
            <fullName>Urokinase-type plasminogen activator chain B</fullName>
        </recommendedName>
    </component>
</protein>
<organism>
    <name type="scientific">Gallus gallus</name>
    <name type="common">Chicken</name>
    <dbReference type="NCBI Taxonomy" id="9031"/>
    <lineage>
        <taxon>Eukaryota</taxon>
        <taxon>Metazoa</taxon>
        <taxon>Chordata</taxon>
        <taxon>Craniata</taxon>
        <taxon>Vertebrata</taxon>
        <taxon>Euteleostomi</taxon>
        <taxon>Archelosauria</taxon>
        <taxon>Archosauria</taxon>
        <taxon>Dinosauria</taxon>
        <taxon>Saurischia</taxon>
        <taxon>Theropoda</taxon>
        <taxon>Coelurosauria</taxon>
        <taxon>Aves</taxon>
        <taxon>Neognathae</taxon>
        <taxon>Galloanserae</taxon>
        <taxon>Galliformes</taxon>
        <taxon>Phasianidae</taxon>
        <taxon>Phasianinae</taxon>
        <taxon>Gallus</taxon>
    </lineage>
</organism>
<proteinExistence type="evidence at transcript level"/>
<sequence length="434" mass="49400">MKLIIFLTVTLCTLVTGLDSVYIRQYYKLSHKHRPQHRECQCLNGGTCITYRFFSQIKRCLCPEGYGGLHCEIDTNSICYSGNGEDYRGMAEDPGCLYWDHPSVIRWGDYHADLKNALQLGLGKHNYCRNPNGRSRPWCYTKRRYSIQETPCSTIEKCERTCGQRSFSKYFKIVGGSQAEVETQPWIAGIFQNIMGTDQFLCGGSLIDPCWVLTAAHCFYNPTKKQPNKSVYKVFLGKSILNTNDEHEQVFMVDEIISHPDFTDHTGGNDNDIALIRIRTASGQCAVESNYVRTVCLPEKNLNLYDNTWCEIAGYGKQNSYDIYYAQRLMSATVNLISQDDCKNKYYDSTRVTDNMVCAGDPLWETDACKGDSGGPMVCEHNGRMTLYGIVSWGDGCAKKNKPGVYTRVTRYLNWIDSNMNAVFTKSRSFREPK</sequence>
<keyword id="KW-1015">Disulfide bond</keyword>
<keyword id="KW-0245">EGF-like domain</keyword>
<keyword id="KW-0325">Glycoprotein</keyword>
<keyword id="KW-0378">Hydrolase</keyword>
<keyword id="KW-0420">Kringle</keyword>
<keyword id="KW-0617">Plasminogen activation</keyword>
<keyword id="KW-0645">Protease</keyword>
<keyword id="KW-1185">Reference proteome</keyword>
<keyword id="KW-0964">Secreted</keyword>
<keyword id="KW-0720">Serine protease</keyword>
<keyword id="KW-0732">Signal</keyword>
<keyword id="KW-0865">Zymogen</keyword>
<evidence type="ECO:0000250" key="1"/>
<evidence type="ECO:0000255" key="2"/>
<evidence type="ECO:0000255" key="3">
    <source>
        <dbReference type="PROSITE-ProRule" id="PRU00076"/>
    </source>
</evidence>
<evidence type="ECO:0000255" key="4">
    <source>
        <dbReference type="PROSITE-ProRule" id="PRU00121"/>
    </source>
</evidence>
<evidence type="ECO:0000255" key="5">
    <source>
        <dbReference type="PROSITE-ProRule" id="PRU00274"/>
    </source>
</evidence>
<gene>
    <name type="primary">PLAU</name>
</gene>
<accession>P15120</accession>
<reference key="1">
    <citation type="journal article" date="1990" name="J. Biol. Chem.">
        <title>The chicken urokinase-type plasminogen activator gene.</title>
        <authorList>
            <person name="Leslie N.D."/>
            <person name="Kessler C.A."/>
            <person name="Bell S.M."/>
            <person name="Degen J.L."/>
        </authorList>
    </citation>
    <scope>NUCLEOTIDE SEQUENCE [GENOMIC DNA / MRNA]</scope>
</reference>
<feature type="signal peptide" evidence="2">
    <location>
        <begin position="1"/>
        <end position="20"/>
    </location>
</feature>
<feature type="chain" id="PRO_0000028337" description="Urokinase-type plasminogen activator">
    <location>
        <begin position="21"/>
        <end position="434"/>
    </location>
</feature>
<feature type="chain" id="PRO_0000028338" description="Urokinase-type plasminogen activator chain A" evidence="1">
    <location>
        <begin position="21"/>
        <end position="171"/>
    </location>
</feature>
<feature type="chain" id="PRO_0000028339" description="Urokinase-type plasminogen activator chain B" evidence="1">
    <location>
        <begin position="173"/>
        <end position="434"/>
    </location>
</feature>
<feature type="domain" description="EGF-like" evidence="3">
    <location>
        <begin position="36"/>
        <end position="72"/>
    </location>
</feature>
<feature type="domain" description="Kringle" evidence="4">
    <location>
        <begin position="79"/>
        <end position="158"/>
    </location>
</feature>
<feature type="domain" description="Peptidase S1" evidence="5">
    <location>
        <begin position="173"/>
        <end position="421"/>
    </location>
</feature>
<feature type="region of interest" description="Connecting peptide">
    <location>
        <begin position="159"/>
        <end position="172"/>
    </location>
</feature>
<feature type="active site" description="Charge relay system" evidence="1">
    <location>
        <position position="217"/>
    </location>
</feature>
<feature type="active site" description="Charge relay system" evidence="1">
    <location>
        <position position="272"/>
    </location>
</feature>
<feature type="active site" description="Charge relay system" evidence="1">
    <location>
        <position position="373"/>
    </location>
</feature>
<feature type="glycosylation site" description="N-linked (GlcNAc...) asparagine" evidence="2">
    <location>
        <position position="228"/>
    </location>
</feature>
<feature type="disulfide bond" evidence="1">
    <location>
        <begin position="40"/>
        <end position="48"/>
    </location>
</feature>
<feature type="disulfide bond" evidence="1">
    <location>
        <begin position="42"/>
        <end position="60"/>
    </location>
</feature>
<feature type="disulfide bond" evidence="1">
    <location>
        <begin position="62"/>
        <end position="71"/>
    </location>
</feature>
<feature type="disulfide bond" evidence="1">
    <location>
        <begin position="79"/>
        <end position="158"/>
    </location>
</feature>
<feature type="disulfide bond" evidence="1">
    <location>
        <begin position="96"/>
        <end position="139"/>
    </location>
</feature>
<feature type="disulfide bond" evidence="1">
    <location>
        <begin position="128"/>
        <end position="152"/>
    </location>
</feature>
<feature type="disulfide bond" description="Interchain (between A and B chains)" evidence="3 4 5">
    <location>
        <begin position="162"/>
        <end position="296"/>
    </location>
</feature>
<feature type="disulfide bond" evidence="1">
    <location>
        <begin position="202"/>
        <end position="218"/>
    </location>
</feature>
<feature type="disulfide bond" evidence="1">
    <location>
        <begin position="210"/>
        <end position="285"/>
    </location>
</feature>
<feature type="disulfide bond" evidence="1">
    <location>
        <begin position="310"/>
        <end position="379"/>
    </location>
</feature>
<feature type="disulfide bond" evidence="1">
    <location>
        <begin position="342"/>
        <end position="358"/>
    </location>
</feature>
<feature type="disulfide bond" evidence="1">
    <location>
        <begin position="369"/>
        <end position="397"/>
    </location>
</feature>
<name>UROK_CHICK</name>
<dbReference type="EC" id="3.4.21.73"/>
<dbReference type="EMBL" id="J05187">
    <property type="protein sequence ID" value="AAA49131.1"/>
    <property type="molecule type" value="mRNA"/>
</dbReference>
<dbReference type="EMBL" id="J05188">
    <property type="protein sequence ID" value="AAA49130.1"/>
    <property type="molecule type" value="Genomic_DNA"/>
</dbReference>
<dbReference type="PIR" id="A35005">
    <property type="entry name" value="A35005"/>
</dbReference>
<dbReference type="RefSeq" id="NP_990774.3">
    <property type="nucleotide sequence ID" value="NM_205443.3"/>
</dbReference>
<dbReference type="SMR" id="P15120"/>
<dbReference type="FunCoup" id="P15120">
    <property type="interactions" value="61"/>
</dbReference>
<dbReference type="STRING" id="9031.ENSGALP00000008143"/>
<dbReference type="MEROPS" id="S01.231"/>
<dbReference type="GlyCosmos" id="P15120">
    <property type="glycosylation" value="1 site, No reported glycans"/>
</dbReference>
<dbReference type="GlyGen" id="P15120">
    <property type="glycosylation" value="1 site"/>
</dbReference>
<dbReference type="PaxDb" id="9031-ENSGALP00000042397"/>
<dbReference type="Ensembl" id="ENSGALT00010051182.1">
    <property type="protein sequence ID" value="ENSGALP00010030373.1"/>
    <property type="gene ID" value="ENSGALG00010021137.1"/>
</dbReference>
<dbReference type="GeneID" id="396424"/>
<dbReference type="KEGG" id="gga:396424"/>
<dbReference type="CTD" id="5328"/>
<dbReference type="VEuPathDB" id="HostDB:geneid_396424"/>
<dbReference type="eggNOG" id="ENOG502QRMI">
    <property type="taxonomic scope" value="Eukaryota"/>
</dbReference>
<dbReference type="GeneTree" id="ENSGT00940000164426"/>
<dbReference type="InParanoid" id="P15120"/>
<dbReference type="OMA" id="WPWCYVQ"/>
<dbReference type="OrthoDB" id="9406323at2759"/>
<dbReference type="PhylomeDB" id="P15120"/>
<dbReference type="PRO" id="PR:P15120"/>
<dbReference type="Proteomes" id="UP000000539">
    <property type="component" value="Chromosome 6"/>
</dbReference>
<dbReference type="GO" id="GO:0005615">
    <property type="term" value="C:extracellular space"/>
    <property type="evidence" value="ECO:0000318"/>
    <property type="project" value="GO_Central"/>
</dbReference>
<dbReference type="GO" id="GO:0004252">
    <property type="term" value="F:serine-type endopeptidase activity"/>
    <property type="evidence" value="ECO:0000318"/>
    <property type="project" value="GO_Central"/>
</dbReference>
<dbReference type="GO" id="GO:0006508">
    <property type="term" value="P:proteolysis"/>
    <property type="evidence" value="ECO:0007669"/>
    <property type="project" value="UniProtKB-KW"/>
</dbReference>
<dbReference type="GO" id="GO:0033628">
    <property type="term" value="P:regulation of cell adhesion mediated by integrin"/>
    <property type="evidence" value="ECO:0000318"/>
    <property type="project" value="GO_Central"/>
</dbReference>
<dbReference type="CDD" id="cd00054">
    <property type="entry name" value="EGF_CA"/>
    <property type="match status" value="1"/>
</dbReference>
<dbReference type="CDD" id="cd00190">
    <property type="entry name" value="Tryp_SPc"/>
    <property type="match status" value="1"/>
</dbReference>
<dbReference type="FunFam" id="2.40.10.10:FF:000069">
    <property type="entry name" value="Hyaluronan-binding protein 2"/>
    <property type="match status" value="1"/>
</dbReference>
<dbReference type="Gene3D" id="2.10.25.10">
    <property type="entry name" value="Laminin"/>
    <property type="match status" value="1"/>
</dbReference>
<dbReference type="Gene3D" id="2.40.20.10">
    <property type="entry name" value="Plasminogen Kringle 4"/>
    <property type="match status" value="1"/>
</dbReference>
<dbReference type="Gene3D" id="2.40.10.10">
    <property type="entry name" value="Trypsin-like serine proteases"/>
    <property type="match status" value="1"/>
</dbReference>
<dbReference type="InterPro" id="IPR000742">
    <property type="entry name" value="EGF-like_dom"/>
</dbReference>
<dbReference type="InterPro" id="IPR000001">
    <property type="entry name" value="Kringle"/>
</dbReference>
<dbReference type="InterPro" id="IPR013806">
    <property type="entry name" value="Kringle-like"/>
</dbReference>
<dbReference type="InterPro" id="IPR018056">
    <property type="entry name" value="Kringle_CS"/>
</dbReference>
<dbReference type="InterPro" id="IPR038178">
    <property type="entry name" value="Kringle_sf"/>
</dbReference>
<dbReference type="InterPro" id="IPR009003">
    <property type="entry name" value="Peptidase_S1_PA"/>
</dbReference>
<dbReference type="InterPro" id="IPR043504">
    <property type="entry name" value="Peptidase_S1_PA_chymotrypsin"/>
</dbReference>
<dbReference type="InterPro" id="IPR001314">
    <property type="entry name" value="Peptidase_S1A"/>
</dbReference>
<dbReference type="InterPro" id="IPR050127">
    <property type="entry name" value="Serine_Proteases_S1"/>
</dbReference>
<dbReference type="InterPro" id="IPR001254">
    <property type="entry name" value="Trypsin_dom"/>
</dbReference>
<dbReference type="InterPro" id="IPR018114">
    <property type="entry name" value="TRYPSIN_HIS"/>
</dbReference>
<dbReference type="InterPro" id="IPR033116">
    <property type="entry name" value="TRYPSIN_SER"/>
</dbReference>
<dbReference type="PANTHER" id="PTHR24264">
    <property type="entry name" value="TRYPSIN-RELATED"/>
    <property type="match status" value="1"/>
</dbReference>
<dbReference type="PANTHER" id="PTHR24264:SF38">
    <property type="entry name" value="UROKINASE-TYPE PLASMINOGEN ACTIVATOR"/>
    <property type="match status" value="1"/>
</dbReference>
<dbReference type="Pfam" id="PF00051">
    <property type="entry name" value="Kringle"/>
    <property type="match status" value="1"/>
</dbReference>
<dbReference type="Pfam" id="PF00089">
    <property type="entry name" value="Trypsin"/>
    <property type="match status" value="1"/>
</dbReference>
<dbReference type="PRINTS" id="PR00722">
    <property type="entry name" value="CHYMOTRYPSIN"/>
</dbReference>
<dbReference type="PRINTS" id="PR00018">
    <property type="entry name" value="KRINGLE"/>
</dbReference>
<dbReference type="SMART" id="SM00130">
    <property type="entry name" value="KR"/>
    <property type="match status" value="1"/>
</dbReference>
<dbReference type="SMART" id="SM00020">
    <property type="entry name" value="Tryp_SPc"/>
    <property type="match status" value="1"/>
</dbReference>
<dbReference type="SUPFAM" id="SSF57440">
    <property type="entry name" value="Kringle-like"/>
    <property type="match status" value="1"/>
</dbReference>
<dbReference type="SUPFAM" id="SSF50494">
    <property type="entry name" value="Trypsin-like serine proteases"/>
    <property type="match status" value="1"/>
</dbReference>
<dbReference type="PROSITE" id="PS00022">
    <property type="entry name" value="EGF_1"/>
    <property type="match status" value="1"/>
</dbReference>
<dbReference type="PROSITE" id="PS01186">
    <property type="entry name" value="EGF_2"/>
    <property type="match status" value="1"/>
</dbReference>
<dbReference type="PROSITE" id="PS50026">
    <property type="entry name" value="EGF_3"/>
    <property type="match status" value="1"/>
</dbReference>
<dbReference type="PROSITE" id="PS00021">
    <property type="entry name" value="KRINGLE_1"/>
    <property type="match status" value="1"/>
</dbReference>
<dbReference type="PROSITE" id="PS50070">
    <property type="entry name" value="KRINGLE_2"/>
    <property type="match status" value="1"/>
</dbReference>
<dbReference type="PROSITE" id="PS50240">
    <property type="entry name" value="TRYPSIN_DOM"/>
    <property type="match status" value="1"/>
</dbReference>
<dbReference type="PROSITE" id="PS00134">
    <property type="entry name" value="TRYPSIN_HIS"/>
    <property type="match status" value="1"/>
</dbReference>
<dbReference type="PROSITE" id="PS00135">
    <property type="entry name" value="TRYPSIN_SER"/>
    <property type="match status" value="1"/>
</dbReference>